<reference key="1">
    <citation type="journal article" date="1994" name="Genomics">
        <title>Murine and bovine blue cone pigment genes: cloning and characterization of two new members of the S family of visual pigments.</title>
        <authorList>
            <person name="Chiu M.I."/>
            <person name="Zack D.J."/>
            <person name="Wang Y."/>
            <person name="Nathans J."/>
        </authorList>
    </citation>
    <scope>NUCLEOTIDE SEQUENCE [GENOMIC DNA]</scope>
    <source>
        <strain>BG18</strain>
    </source>
</reference>
<proteinExistence type="evidence at protein level"/>
<feature type="chain" id="PRO_0000197761" description="Short-wave-sensitive opsin 1">
    <location>
        <begin position="1"/>
        <end position="349"/>
    </location>
</feature>
<feature type="topological domain" description="Extracellular">
    <location>
        <begin position="1"/>
        <end position="34"/>
    </location>
</feature>
<feature type="transmembrane region" description="Helical; Name=1" evidence="3">
    <location>
        <begin position="35"/>
        <end position="59"/>
    </location>
</feature>
<feature type="topological domain" description="Cytoplasmic">
    <location>
        <begin position="60"/>
        <end position="71"/>
    </location>
</feature>
<feature type="transmembrane region" description="Helical; Name=2" evidence="3">
    <location>
        <begin position="72"/>
        <end position="97"/>
    </location>
</feature>
<feature type="topological domain" description="Extracellular">
    <location>
        <begin position="98"/>
        <end position="111"/>
    </location>
</feature>
<feature type="transmembrane region" description="Helical; Name=3" evidence="3">
    <location>
        <begin position="112"/>
        <end position="131"/>
    </location>
</feature>
<feature type="topological domain" description="Cytoplasmic">
    <location>
        <begin position="132"/>
        <end position="150"/>
    </location>
</feature>
<feature type="transmembrane region" description="Helical; Name=4" evidence="3">
    <location>
        <begin position="151"/>
        <end position="174"/>
    </location>
</feature>
<feature type="topological domain" description="Extracellular">
    <location>
        <begin position="175"/>
        <end position="200"/>
    </location>
</feature>
<feature type="transmembrane region" description="Helical; Name=5" evidence="3">
    <location>
        <begin position="201"/>
        <end position="228"/>
    </location>
</feature>
<feature type="topological domain" description="Cytoplasmic">
    <location>
        <begin position="229"/>
        <end position="250"/>
    </location>
</feature>
<feature type="transmembrane region" description="Helical; Name=6" evidence="3">
    <location>
        <begin position="251"/>
        <end position="274"/>
    </location>
</feature>
<feature type="topological domain" description="Extracellular">
    <location>
        <begin position="275"/>
        <end position="282"/>
    </location>
</feature>
<feature type="transmembrane region" description="Helical; Name=7" evidence="3">
    <location>
        <begin position="283"/>
        <end position="307"/>
    </location>
</feature>
<feature type="topological domain" description="Cytoplasmic">
    <location>
        <begin position="308"/>
        <end position="349"/>
    </location>
</feature>
<feature type="region of interest" description="Disordered" evidence="5">
    <location>
        <begin position="327"/>
        <end position="349"/>
    </location>
</feature>
<feature type="compositionally biased region" description="Polar residues" evidence="5">
    <location>
        <begin position="330"/>
        <end position="349"/>
    </location>
</feature>
<feature type="modified residue" description="N6-(retinylidene)lysine">
    <location>
        <position position="294"/>
    </location>
</feature>
<feature type="glycosylation site" description="N-linked (GlcNAc...) asparagine" evidence="6">
    <location>
        <position position="15"/>
    </location>
</feature>
<feature type="disulfide bond" evidence="4">
    <location>
        <begin position="108"/>
        <end position="185"/>
    </location>
</feature>
<organism>
    <name type="scientific">Bos taurus</name>
    <name type="common">Bovine</name>
    <dbReference type="NCBI Taxonomy" id="9913"/>
    <lineage>
        <taxon>Eukaryota</taxon>
        <taxon>Metazoa</taxon>
        <taxon>Chordata</taxon>
        <taxon>Craniata</taxon>
        <taxon>Vertebrata</taxon>
        <taxon>Euteleostomi</taxon>
        <taxon>Mammalia</taxon>
        <taxon>Eutheria</taxon>
        <taxon>Laurasiatheria</taxon>
        <taxon>Artiodactyla</taxon>
        <taxon>Ruminantia</taxon>
        <taxon>Pecora</taxon>
        <taxon>Bovidae</taxon>
        <taxon>Bovinae</taxon>
        <taxon>Bos</taxon>
    </lineage>
</organism>
<name>OPSB_BOVIN</name>
<evidence type="ECO:0000250" key="1">
    <source>
        <dbReference type="UniProtKB" id="P03999"/>
    </source>
</evidence>
<evidence type="ECO:0000250" key="2">
    <source>
        <dbReference type="UniProtKB" id="P51491"/>
    </source>
</evidence>
<evidence type="ECO:0000255" key="3"/>
<evidence type="ECO:0000255" key="4">
    <source>
        <dbReference type="PROSITE-ProRule" id="PRU00521"/>
    </source>
</evidence>
<evidence type="ECO:0000256" key="5">
    <source>
        <dbReference type="SAM" id="MobiDB-lite"/>
    </source>
</evidence>
<evidence type="ECO:0000305" key="6"/>
<gene>
    <name type="primary">OPN1SW</name>
    <name type="synonym">BCP</name>
</gene>
<dbReference type="EMBL" id="U49764">
    <property type="protein sequence ID" value="AAA93189.1"/>
    <property type="molecule type" value="Genomic_DNA"/>
</dbReference>
<dbReference type="EMBL" id="U49760">
    <property type="protein sequence ID" value="AAA93189.1"/>
    <property type="status" value="JOINED"/>
    <property type="molecule type" value="Genomic_DNA"/>
</dbReference>
<dbReference type="EMBL" id="U49761">
    <property type="protein sequence ID" value="AAA93189.1"/>
    <property type="status" value="JOINED"/>
    <property type="molecule type" value="Genomic_DNA"/>
</dbReference>
<dbReference type="EMBL" id="U49762">
    <property type="protein sequence ID" value="AAA93189.1"/>
    <property type="status" value="JOINED"/>
    <property type="molecule type" value="Genomic_DNA"/>
</dbReference>
<dbReference type="EMBL" id="U49763">
    <property type="protein sequence ID" value="AAA93189.1"/>
    <property type="status" value="JOINED"/>
    <property type="molecule type" value="Genomic_DNA"/>
</dbReference>
<dbReference type="EMBL" id="U92557">
    <property type="protein sequence ID" value="AAB50158.1"/>
    <property type="molecule type" value="mRNA"/>
</dbReference>
<dbReference type="PIR" id="A54679">
    <property type="entry name" value="A54679"/>
</dbReference>
<dbReference type="RefSeq" id="NP_776992.1">
    <property type="nucleotide sequence ID" value="NM_174567.1"/>
</dbReference>
<dbReference type="SMR" id="P51490"/>
<dbReference type="FunCoup" id="P51490">
    <property type="interactions" value="98"/>
</dbReference>
<dbReference type="STRING" id="9913.ENSBTAP00000021912"/>
<dbReference type="GlyCosmos" id="P51490">
    <property type="glycosylation" value="1 site, No reported glycans"/>
</dbReference>
<dbReference type="GlyGen" id="P51490">
    <property type="glycosylation" value="1 site"/>
</dbReference>
<dbReference type="PaxDb" id="9913-ENSBTAP00000021912"/>
<dbReference type="Ensembl" id="ENSBTAT00000021912.3">
    <property type="protein sequence ID" value="ENSBTAP00000021912.1"/>
    <property type="gene ID" value="ENSBTAG00000016485.3"/>
</dbReference>
<dbReference type="GeneID" id="282294"/>
<dbReference type="KEGG" id="bta:282294"/>
<dbReference type="CTD" id="611"/>
<dbReference type="VEuPathDB" id="HostDB:ENSBTAG00000016485"/>
<dbReference type="VGNC" id="VGNC:32436">
    <property type="gene designation" value="OPN1SW"/>
</dbReference>
<dbReference type="eggNOG" id="KOG3656">
    <property type="taxonomic scope" value="Eukaryota"/>
</dbReference>
<dbReference type="GeneTree" id="ENSGT01030000234549"/>
<dbReference type="HOGENOM" id="CLU_009579_3_0_1"/>
<dbReference type="InParanoid" id="P51490"/>
<dbReference type="OMA" id="QTAFMGF"/>
<dbReference type="OrthoDB" id="6142583at2759"/>
<dbReference type="TreeFam" id="TF324998"/>
<dbReference type="Reactome" id="R-BTA-2187335">
    <property type="pathway name" value="The retinoid cycle in cones (daylight vision)"/>
</dbReference>
<dbReference type="Reactome" id="R-BTA-418594">
    <property type="pathway name" value="G alpha (i) signalling events"/>
</dbReference>
<dbReference type="Reactome" id="R-BTA-419771">
    <property type="pathway name" value="Opsins"/>
</dbReference>
<dbReference type="Proteomes" id="UP000009136">
    <property type="component" value="Chromosome 4"/>
</dbReference>
<dbReference type="Bgee" id="ENSBTAG00000016485">
    <property type="expression patterns" value="Expressed in retina and 6 other cell types or tissues"/>
</dbReference>
<dbReference type="GO" id="GO:0120199">
    <property type="term" value="C:cone photoreceptor outer segment"/>
    <property type="evidence" value="ECO:0007669"/>
    <property type="project" value="Ensembl"/>
</dbReference>
<dbReference type="GO" id="GO:0048471">
    <property type="term" value="C:perinuclear region of cytoplasm"/>
    <property type="evidence" value="ECO:0000250"/>
    <property type="project" value="UniProtKB"/>
</dbReference>
<dbReference type="GO" id="GO:0001917">
    <property type="term" value="C:photoreceptor inner segment"/>
    <property type="evidence" value="ECO:0007669"/>
    <property type="project" value="UniProtKB-SubCell"/>
</dbReference>
<dbReference type="GO" id="GO:0001750">
    <property type="term" value="C:photoreceptor outer segment"/>
    <property type="evidence" value="ECO:0000318"/>
    <property type="project" value="GO_Central"/>
</dbReference>
<dbReference type="GO" id="GO:0005886">
    <property type="term" value="C:plasma membrane"/>
    <property type="evidence" value="ECO:0000250"/>
    <property type="project" value="UniProtKB"/>
</dbReference>
<dbReference type="GO" id="GO:0008020">
    <property type="term" value="F:G protein-coupled photoreceptor activity"/>
    <property type="evidence" value="ECO:0000318"/>
    <property type="project" value="GO_Central"/>
</dbReference>
<dbReference type="GO" id="GO:0071482">
    <property type="term" value="P:cellular response to light stimulus"/>
    <property type="evidence" value="ECO:0000318"/>
    <property type="project" value="GO_Central"/>
</dbReference>
<dbReference type="GO" id="GO:0071492">
    <property type="term" value="P:cellular response to UV-A"/>
    <property type="evidence" value="ECO:0007669"/>
    <property type="project" value="Ensembl"/>
</dbReference>
<dbReference type="GO" id="GO:0007186">
    <property type="term" value="P:G protein-coupled receptor signaling pathway"/>
    <property type="evidence" value="ECO:0000318"/>
    <property type="project" value="GO_Central"/>
</dbReference>
<dbReference type="GO" id="GO:0007602">
    <property type="term" value="P:phototransduction"/>
    <property type="evidence" value="ECO:0000318"/>
    <property type="project" value="GO_Central"/>
</dbReference>
<dbReference type="GO" id="GO:0007601">
    <property type="term" value="P:visual perception"/>
    <property type="evidence" value="ECO:0007669"/>
    <property type="project" value="UniProtKB-KW"/>
</dbReference>
<dbReference type="CDD" id="cd15076">
    <property type="entry name" value="7tmA_SWS1_opsin"/>
    <property type="match status" value="1"/>
</dbReference>
<dbReference type="FunFam" id="1.20.1070.10:FF:000018">
    <property type="entry name" value="Rhodopsin"/>
    <property type="match status" value="1"/>
</dbReference>
<dbReference type="Gene3D" id="1.20.1070.10">
    <property type="entry name" value="Rhodopsin 7-helix transmembrane proteins"/>
    <property type="match status" value="1"/>
</dbReference>
<dbReference type="InterPro" id="IPR050125">
    <property type="entry name" value="GPCR_opsins"/>
</dbReference>
<dbReference type="InterPro" id="IPR000276">
    <property type="entry name" value="GPCR_Rhodpsn"/>
</dbReference>
<dbReference type="InterPro" id="IPR017452">
    <property type="entry name" value="GPCR_Rhodpsn_7TM"/>
</dbReference>
<dbReference type="InterPro" id="IPR001760">
    <property type="entry name" value="Opsin"/>
</dbReference>
<dbReference type="InterPro" id="IPR001521">
    <property type="entry name" value="Opsin_blue"/>
</dbReference>
<dbReference type="InterPro" id="IPR027430">
    <property type="entry name" value="Retinal_BS"/>
</dbReference>
<dbReference type="PANTHER" id="PTHR24240">
    <property type="entry name" value="OPSIN"/>
    <property type="match status" value="1"/>
</dbReference>
<dbReference type="Pfam" id="PF00001">
    <property type="entry name" value="7tm_1"/>
    <property type="match status" value="1"/>
</dbReference>
<dbReference type="PRINTS" id="PR00237">
    <property type="entry name" value="GPCRRHODOPSN"/>
</dbReference>
<dbReference type="PRINTS" id="PR00238">
    <property type="entry name" value="OPSIN"/>
</dbReference>
<dbReference type="PRINTS" id="PR00574">
    <property type="entry name" value="OPSINBLUE"/>
</dbReference>
<dbReference type="SUPFAM" id="SSF81321">
    <property type="entry name" value="Family A G protein-coupled receptor-like"/>
    <property type="match status" value="1"/>
</dbReference>
<dbReference type="PROSITE" id="PS00237">
    <property type="entry name" value="G_PROTEIN_RECEP_F1_1"/>
    <property type="match status" value="1"/>
</dbReference>
<dbReference type="PROSITE" id="PS50262">
    <property type="entry name" value="G_PROTEIN_RECEP_F1_2"/>
    <property type="match status" value="1"/>
</dbReference>
<dbReference type="PROSITE" id="PS00238">
    <property type="entry name" value="OPSIN"/>
    <property type="match status" value="1"/>
</dbReference>
<protein>
    <recommendedName>
        <fullName>Short-wave-sensitive opsin 1</fullName>
    </recommendedName>
    <alternativeName>
        <fullName>Blue cone photoreceptor pigment</fullName>
    </alternativeName>
    <alternativeName>
        <fullName>Blue-sensitive opsin</fullName>
        <shortName>BOP</shortName>
    </alternativeName>
</protein>
<accession>P51490</accession>
<sequence length="349" mass="39302">MSKMSEEEEFLLFKNISLVGPWDGPQYHLAPVWAFHLQAVFMGFVFFVGTPLNATVLVATLRYRKLRQPLNYILVNVSLGGFIYCIFSVFIVFITSCYGYFVFGRHVCALEAFLGCTAGLVTGWSLAFLAFERYIIICKPFGNFRFSSKHALMVVVATWTIGIGVSIPPFFGWSRFVPEGLQCSCGPDWYTVGTKYYSEYYTWFLFIFCYIVPLSLICFSYSQLLGALRAVAAQQQESASTQKAEREVSHMVVVMVGSFCLCYTPYAALAMYIVNNRNHGVDLRLVTIPAFFSKSACVYNPIIYCFMNKQFRACIMEMVCGKPMTDESELSSSQKTEVSTVSSSQVGPN</sequence>
<comment type="function">
    <text evidence="1 2">Visual pigments are the light-absorbing molecules that mediate vision. They consist of an apoprotein, opsin, covalently linked to cis-retinal (By similarity). Required for the maintenance of cone outer segment organization in the ventral retina, but not essential for the maintenance of functioning cone photoreceptors (By similarity). Involved in ensuring correct abundance and localization of retinal membrane proteins (By similarity). May increase spectral sensitivity in dim light (By similarity).</text>
</comment>
<comment type="subcellular location">
    <subcellularLocation>
        <location evidence="1">Cell membrane</location>
        <topology evidence="3">Multi-pass membrane protein</topology>
    </subcellularLocation>
    <subcellularLocation>
        <location evidence="2">Photoreceptor inner segment</location>
    </subcellularLocation>
    <subcellularLocation>
        <location evidence="2">Cell projection</location>
        <location evidence="2">Cilium</location>
        <location evidence="2">Photoreceptor outer segment</location>
    </subcellularLocation>
    <subcellularLocation>
        <location evidence="1">Cytoplasm</location>
        <location evidence="1">Perinuclear region</location>
    </subcellularLocation>
</comment>
<comment type="PTM">
    <text>Phosphorylated on some or all of the serine and threonine residues present in the C-terminal region.</text>
</comment>
<comment type="similarity">
    <text evidence="4">Belongs to the G-protein coupled receptor 1 family. Opsin subfamily.</text>
</comment>
<keyword id="KW-1003">Cell membrane</keyword>
<keyword id="KW-0966">Cell projection</keyword>
<keyword id="KW-0157">Chromophore</keyword>
<keyword id="KW-0963">Cytoplasm</keyword>
<keyword id="KW-1015">Disulfide bond</keyword>
<keyword id="KW-0297">G-protein coupled receptor</keyword>
<keyword id="KW-0325">Glycoprotein</keyword>
<keyword id="KW-0472">Membrane</keyword>
<keyword id="KW-0597">Phosphoprotein</keyword>
<keyword id="KW-0600">Photoreceptor protein</keyword>
<keyword id="KW-0675">Receptor</keyword>
<keyword id="KW-1185">Reference proteome</keyword>
<keyword id="KW-0681">Retinal protein</keyword>
<keyword id="KW-0716">Sensory transduction</keyword>
<keyword id="KW-0807">Transducer</keyword>
<keyword id="KW-0812">Transmembrane</keyword>
<keyword id="KW-1133">Transmembrane helix</keyword>
<keyword id="KW-0844">Vision</keyword>